<keyword id="KW-0067">ATP-binding</keyword>
<keyword id="KW-0238">DNA-binding</keyword>
<keyword id="KW-0479">Metal-binding</keyword>
<keyword id="KW-0547">Nucleotide-binding</keyword>
<keyword id="KW-1185">Reference proteome</keyword>
<keyword id="KW-0678">Repressor</keyword>
<keyword id="KW-0804">Transcription</keyword>
<keyword id="KW-0805">Transcription regulation</keyword>
<keyword id="KW-0862">Zinc</keyword>
<keyword id="KW-0863">Zinc-finger</keyword>
<organism>
    <name type="scientific">Lactococcus lactis subsp. lactis (strain IL1403)</name>
    <name type="common">Streptococcus lactis</name>
    <dbReference type="NCBI Taxonomy" id="272623"/>
    <lineage>
        <taxon>Bacteria</taxon>
        <taxon>Bacillati</taxon>
        <taxon>Bacillota</taxon>
        <taxon>Bacilli</taxon>
        <taxon>Lactobacillales</taxon>
        <taxon>Streptococcaceae</taxon>
        <taxon>Lactococcus</taxon>
    </lineage>
</organism>
<accession>Q9CHI1</accession>
<protein>
    <recommendedName>
        <fullName evidence="1">Transcriptional repressor NrdR</fullName>
    </recommendedName>
</protein>
<comment type="function">
    <text evidence="1">Negatively regulates transcription of bacterial ribonucleotide reductase nrd genes and operons by binding to NrdR-boxes.</text>
</comment>
<comment type="cofactor">
    <cofactor evidence="1">
        <name>Zn(2+)</name>
        <dbReference type="ChEBI" id="CHEBI:29105"/>
    </cofactor>
    <text evidence="1">Binds 1 zinc ion.</text>
</comment>
<comment type="similarity">
    <text evidence="1">Belongs to the NrdR family.</text>
</comment>
<name>NRDR_LACLA</name>
<dbReference type="EMBL" id="AE005176">
    <property type="protein sequence ID" value="AAK04848.1"/>
    <property type="molecule type" value="Genomic_DNA"/>
</dbReference>
<dbReference type="PIR" id="F86718">
    <property type="entry name" value="F86718"/>
</dbReference>
<dbReference type="RefSeq" id="NP_266906.1">
    <property type="nucleotide sequence ID" value="NC_002662.1"/>
</dbReference>
<dbReference type="RefSeq" id="WP_003132469.1">
    <property type="nucleotide sequence ID" value="NC_002662.1"/>
</dbReference>
<dbReference type="SMR" id="Q9CHI1"/>
<dbReference type="PaxDb" id="272623-L157023"/>
<dbReference type="EnsemblBacteria" id="AAK04848">
    <property type="protein sequence ID" value="AAK04848"/>
    <property type="gene ID" value="L157023"/>
</dbReference>
<dbReference type="GeneID" id="89632883"/>
<dbReference type="KEGG" id="lla:L157023"/>
<dbReference type="PATRIC" id="fig|272623.7.peg.804"/>
<dbReference type="eggNOG" id="COG1327">
    <property type="taxonomic scope" value="Bacteria"/>
</dbReference>
<dbReference type="HOGENOM" id="CLU_108412_0_0_9"/>
<dbReference type="OrthoDB" id="9807461at2"/>
<dbReference type="Proteomes" id="UP000002196">
    <property type="component" value="Chromosome"/>
</dbReference>
<dbReference type="GO" id="GO:0005524">
    <property type="term" value="F:ATP binding"/>
    <property type="evidence" value="ECO:0007669"/>
    <property type="project" value="UniProtKB-KW"/>
</dbReference>
<dbReference type="GO" id="GO:0003677">
    <property type="term" value="F:DNA binding"/>
    <property type="evidence" value="ECO:0007669"/>
    <property type="project" value="UniProtKB-KW"/>
</dbReference>
<dbReference type="GO" id="GO:0008270">
    <property type="term" value="F:zinc ion binding"/>
    <property type="evidence" value="ECO:0007669"/>
    <property type="project" value="UniProtKB-KW"/>
</dbReference>
<dbReference type="GO" id="GO:0045892">
    <property type="term" value="P:negative regulation of DNA-templated transcription"/>
    <property type="evidence" value="ECO:0007669"/>
    <property type="project" value="UniProtKB-UniRule"/>
</dbReference>
<dbReference type="HAMAP" id="MF_00440">
    <property type="entry name" value="NrdR"/>
    <property type="match status" value="1"/>
</dbReference>
<dbReference type="InterPro" id="IPR005144">
    <property type="entry name" value="ATP-cone_dom"/>
</dbReference>
<dbReference type="InterPro" id="IPR055173">
    <property type="entry name" value="NrdR-like_N"/>
</dbReference>
<dbReference type="InterPro" id="IPR003796">
    <property type="entry name" value="RNR_NrdR-like"/>
</dbReference>
<dbReference type="NCBIfam" id="TIGR00244">
    <property type="entry name" value="transcriptional regulator NrdR"/>
    <property type="match status" value="1"/>
</dbReference>
<dbReference type="PANTHER" id="PTHR30455">
    <property type="entry name" value="TRANSCRIPTIONAL REPRESSOR NRDR"/>
    <property type="match status" value="1"/>
</dbReference>
<dbReference type="PANTHER" id="PTHR30455:SF2">
    <property type="entry name" value="TRANSCRIPTIONAL REPRESSOR NRDR"/>
    <property type="match status" value="1"/>
</dbReference>
<dbReference type="Pfam" id="PF03477">
    <property type="entry name" value="ATP-cone"/>
    <property type="match status" value="1"/>
</dbReference>
<dbReference type="Pfam" id="PF22811">
    <property type="entry name" value="Zn_ribbon_NrdR"/>
    <property type="match status" value="1"/>
</dbReference>
<dbReference type="PROSITE" id="PS51161">
    <property type="entry name" value="ATP_CONE"/>
    <property type="match status" value="1"/>
</dbReference>
<evidence type="ECO:0000255" key="1">
    <source>
        <dbReference type="HAMAP-Rule" id="MF_00440"/>
    </source>
</evidence>
<reference key="1">
    <citation type="journal article" date="2001" name="Genome Res.">
        <title>The complete genome sequence of the lactic acid bacterium Lactococcus lactis ssp. lactis IL1403.</title>
        <authorList>
            <person name="Bolotin A."/>
            <person name="Wincker P."/>
            <person name="Mauger S."/>
            <person name="Jaillon O."/>
            <person name="Malarme K."/>
            <person name="Weissenbach J."/>
            <person name="Ehrlich S.D."/>
            <person name="Sorokin A."/>
        </authorList>
    </citation>
    <scope>NUCLEOTIDE SEQUENCE [LARGE SCALE GENOMIC DNA]</scope>
    <source>
        <strain>IL1403</strain>
    </source>
</reference>
<proteinExistence type="inferred from homology"/>
<feature type="chain" id="PRO_0000182308" description="Transcriptional repressor NrdR">
    <location>
        <begin position="1"/>
        <end position="148"/>
    </location>
</feature>
<feature type="domain" description="ATP-cone" evidence="1">
    <location>
        <begin position="47"/>
        <end position="137"/>
    </location>
</feature>
<feature type="zinc finger region" evidence="1">
    <location>
        <begin position="3"/>
        <end position="32"/>
    </location>
</feature>
<gene>
    <name evidence="1" type="primary">nrdR</name>
    <name type="ordered locus">LL0750</name>
    <name type="ORF">L157023</name>
</gene>
<sequence>MRCPKCSSEESKVVDSRQAEDAIRRRRVCESCGFRFTTFERIEEMPLLVIKKDDKREPFNREKIVRGLVRSAYKRPVSSEDIETTVANVERKIRQLDSNEVESDVIGEFVMQELAELDDITYIRFASVYRSFKDVSELEELLKNITKK</sequence>